<dbReference type="EC" id="3.4.-.-"/>
<dbReference type="EMBL" id="HF968452">
    <property type="protein sequence ID" value="CCW72534.1"/>
    <property type="molecule type" value="Genomic_DNA"/>
</dbReference>
<dbReference type="RefSeq" id="WP_004946433.1">
    <property type="nucleotide sequence ID" value="NZ_JBFADJ010000017.1"/>
</dbReference>
<dbReference type="SMR" id="P83543"/>
<dbReference type="MEROPS" id="M04.017"/>
<dbReference type="GO" id="GO:0005576">
    <property type="term" value="C:extracellular region"/>
    <property type="evidence" value="ECO:0007669"/>
    <property type="project" value="UniProtKB-SubCell"/>
</dbReference>
<dbReference type="GO" id="GO:0016020">
    <property type="term" value="C:membrane"/>
    <property type="evidence" value="ECO:0007669"/>
    <property type="project" value="InterPro"/>
</dbReference>
<dbReference type="GO" id="GO:0005509">
    <property type="term" value="F:calcium ion binding"/>
    <property type="evidence" value="ECO:0007669"/>
    <property type="project" value="InterPro"/>
</dbReference>
<dbReference type="GO" id="GO:0004222">
    <property type="term" value="F:metalloendopeptidase activity"/>
    <property type="evidence" value="ECO:0007669"/>
    <property type="project" value="InterPro"/>
</dbReference>
<dbReference type="GO" id="GO:0004252">
    <property type="term" value="F:serine-type endopeptidase activity"/>
    <property type="evidence" value="ECO:0007669"/>
    <property type="project" value="InterPro"/>
</dbReference>
<dbReference type="GO" id="GO:0005975">
    <property type="term" value="P:carbohydrate metabolic process"/>
    <property type="evidence" value="ECO:0007669"/>
    <property type="project" value="UniProtKB-ARBA"/>
</dbReference>
<dbReference type="GO" id="GO:0006508">
    <property type="term" value="P:proteolysis"/>
    <property type="evidence" value="ECO:0007669"/>
    <property type="project" value="UniProtKB-KW"/>
</dbReference>
<dbReference type="CDD" id="cd09597">
    <property type="entry name" value="M4_TLP"/>
    <property type="match status" value="1"/>
</dbReference>
<dbReference type="Gene3D" id="3.10.170.10">
    <property type="match status" value="1"/>
</dbReference>
<dbReference type="Gene3D" id="3.10.450.490">
    <property type="match status" value="1"/>
</dbReference>
<dbReference type="Gene3D" id="2.60.120.260">
    <property type="entry name" value="Galactose-binding domain-like"/>
    <property type="match status" value="1"/>
</dbReference>
<dbReference type="Gene3D" id="2.60.40.10">
    <property type="entry name" value="Immunoglobulins"/>
    <property type="match status" value="1"/>
</dbReference>
<dbReference type="Gene3D" id="1.10.390.10">
    <property type="entry name" value="Neutral Protease Domain 2"/>
    <property type="match status" value="1"/>
</dbReference>
<dbReference type="InterPro" id="IPR006644">
    <property type="entry name" value="Cadg"/>
</dbReference>
<dbReference type="InterPro" id="IPR015919">
    <property type="entry name" value="Cadherin-like_sf"/>
</dbReference>
<dbReference type="InterPro" id="IPR011096">
    <property type="entry name" value="FTP_domain"/>
</dbReference>
<dbReference type="InterPro" id="IPR008979">
    <property type="entry name" value="Galactose-bd-like_sf"/>
</dbReference>
<dbReference type="InterPro" id="IPR013783">
    <property type="entry name" value="Ig-like_fold"/>
</dbReference>
<dbReference type="InterPro" id="IPR002884">
    <property type="entry name" value="P_dom"/>
</dbReference>
<dbReference type="InterPro" id="IPR023612">
    <property type="entry name" value="Peptidase_M4"/>
</dbReference>
<dbReference type="InterPro" id="IPR027268">
    <property type="entry name" value="Peptidase_M4/M1_CTD_sf"/>
</dbReference>
<dbReference type="InterPro" id="IPR001570">
    <property type="entry name" value="Peptidase_M4_C_domain"/>
</dbReference>
<dbReference type="InterPro" id="IPR013856">
    <property type="entry name" value="Peptidase_M4_domain"/>
</dbReference>
<dbReference type="InterPro" id="IPR050728">
    <property type="entry name" value="Zinc_Metalloprotease_M4"/>
</dbReference>
<dbReference type="PANTHER" id="PTHR33794">
    <property type="entry name" value="BACILLOLYSIN"/>
    <property type="match status" value="1"/>
</dbReference>
<dbReference type="PANTHER" id="PTHR33794:SF1">
    <property type="entry name" value="BACILLOLYSIN"/>
    <property type="match status" value="1"/>
</dbReference>
<dbReference type="Pfam" id="PF07504">
    <property type="entry name" value="FTP"/>
    <property type="match status" value="1"/>
</dbReference>
<dbReference type="Pfam" id="PF05345">
    <property type="entry name" value="He_PIG"/>
    <property type="match status" value="1"/>
</dbReference>
<dbReference type="Pfam" id="PF01483">
    <property type="entry name" value="P_proprotein"/>
    <property type="match status" value="1"/>
</dbReference>
<dbReference type="Pfam" id="PF01447">
    <property type="entry name" value="Peptidase_M4"/>
    <property type="match status" value="1"/>
</dbReference>
<dbReference type="Pfam" id="PF02868">
    <property type="entry name" value="Peptidase_M4_C"/>
    <property type="match status" value="1"/>
</dbReference>
<dbReference type="PRINTS" id="PR00730">
    <property type="entry name" value="THERMOLYSIN"/>
</dbReference>
<dbReference type="SMART" id="SM00736">
    <property type="entry name" value="CADG"/>
    <property type="match status" value="1"/>
</dbReference>
<dbReference type="SUPFAM" id="SSF49313">
    <property type="entry name" value="Cadherin-like"/>
    <property type="match status" value="1"/>
</dbReference>
<dbReference type="SUPFAM" id="SSF49785">
    <property type="entry name" value="Galactose-binding domain-like"/>
    <property type="match status" value="1"/>
</dbReference>
<dbReference type="SUPFAM" id="SSF55486">
    <property type="entry name" value="Metalloproteases ('zincins'), catalytic domain"/>
    <property type="match status" value="1"/>
</dbReference>
<dbReference type="PROSITE" id="PS51829">
    <property type="entry name" value="P_HOMO_B"/>
    <property type="match status" value="1"/>
</dbReference>
<dbReference type="PROSITE" id="PS00142">
    <property type="entry name" value="ZINC_PROTEASE"/>
    <property type="match status" value="1"/>
</dbReference>
<organism>
    <name type="scientific">Streptomyces mobaraensis</name>
    <name type="common">Streptoverticillium mobaraense</name>
    <dbReference type="NCBI Taxonomy" id="35621"/>
    <lineage>
        <taxon>Bacteria</taxon>
        <taxon>Bacillati</taxon>
        <taxon>Actinomycetota</taxon>
        <taxon>Actinomycetes</taxon>
        <taxon>Kitasatosporales</taxon>
        <taxon>Streptomycetaceae</taxon>
        <taxon>Streptomyces</taxon>
    </lineage>
</organism>
<accession>P83543</accession>
<accession>N1NTU0</accession>
<reference key="1">
    <citation type="submission" date="2013-04" db="EMBL/GenBank/DDBJ databases">
        <title>Gene structures of the transglutaminase-activating metalloprotease and two related putative metalloproteases from Streptomyces mobaraensis.</title>
        <authorList>
            <person name="Zindel S."/>
            <person name="Froels S."/>
            <person name="Kletzin A."/>
            <person name="Pfeifer F."/>
            <person name="Fuchsbauer H.L."/>
        </authorList>
    </citation>
    <scope>NUCLEOTIDE SEQUENCE [GENOMIC DNA]</scope>
    <source>
        <strain>ATCC 29032 / CBS 199.75 / DSM 40847 / NBRC 13819 / NCIMB 11159 / NRRL B-3729 / VKM Ac-928</strain>
    </source>
</reference>
<reference key="2">
    <citation type="journal article" date="2003" name="Eur. J. Biochem.">
        <title>Transglutaminase from Streptomyces mobaraensis is activated by an endogenous metalloprotease.</title>
        <authorList>
            <person name="Zotzel J."/>
            <person name="Keller P."/>
            <person name="Fuchsbauer H.-L."/>
        </authorList>
    </citation>
    <scope>PROTEIN SEQUENCE OF 230-247</scope>
    <scope>FUNCTION</scope>
    <scope>SUBCELLULAR LOCATION</scope>
    <source>
        <strain>ATCC 27441 / CBS 777.72 / DSM 40587 / JCM 4778 / NBRC 13476 / VKM Ac-879</strain>
    </source>
</reference>
<sequence length="760" mass="79181">MRPTPQRRAVATGALVAVTAMLAVGVQTTSANAGQDKAAHPAPRQSIHKPDPGAEPVKLTPSQRAELIRDANATKAETAKNLGLGAKEKLVVKDVVKDKNGTLHTRYERTYDGLPVLGGDLVVDATRSGQVKTAAKATKQRIAVASTTPSLAASAAEKDAVKAARAKGSKAGKADKAPRKVVWAAKGTPVLAYETVVGGVQDDGTPSQLHVITDAKTGKKLFEFQGVKQGTGNSQHSGQVQIGTTKSGSSYQMNDTTRGGHKTYNLNHGSSGTGTLFTDSDDVWGNGTNSDPATAGVDAHYGAQLTWDYYKNVHGRNGIRGDGVGAYSRVHYGNNYVNAFWDDSCFCMTYGDGNGIPLTSIDVAAHEMTHGVTSATANLTYSGESGGLNEATSDMMATAVEFWANNPADPGDYLIGEKININGDGTPLRYMDKPSKDGASKDAWYSGLGGIDVHYSSGPANHWFYLASEGSGPKDIGGVHYDSPTSDGLPVTGVGRDNAAKIWFKALTERMQSNTDYKGARDATLWAAGELFGVNSDTYNNVANAWAAINVGPRASSGVSVTSPGDQTSIVNQAVSLQIKATGSTSGALTYSATGLPAGLSINASTGLISGTPTTTGTSNVTVTVKDSAGKTGSTSFKWTVNTTGGGSVFENTTQVAIPDAGAAVTSPIVVTRSGNGPSALKVDVNITHTYRGDLTIDLVAPNGKTWRLKNSDAWDSAADVSETYTVDASSVSANGTWKLKVQDVYSGDSGTIDKWRLTF</sequence>
<keyword id="KW-0903">Direct protein sequencing</keyword>
<keyword id="KW-0378">Hydrolase</keyword>
<keyword id="KW-0479">Metal-binding</keyword>
<keyword id="KW-0482">Metalloprotease</keyword>
<keyword id="KW-0645">Protease</keyword>
<keyword id="KW-0964">Secreted</keyword>
<keyword id="KW-0732">Signal</keyword>
<keyword id="KW-0862">Zinc</keyword>
<evidence type="ECO:0000250" key="1"/>
<evidence type="ECO:0000255" key="2"/>
<evidence type="ECO:0000255" key="3">
    <source>
        <dbReference type="PROSITE-ProRule" id="PRU01173"/>
    </source>
</evidence>
<evidence type="ECO:0000255" key="4">
    <source>
        <dbReference type="PROSITE-ProRule" id="PRU10095"/>
    </source>
</evidence>
<evidence type="ECO:0000256" key="5">
    <source>
        <dbReference type="SAM" id="MobiDB-lite"/>
    </source>
</evidence>
<evidence type="ECO:0000269" key="6">
    <source>
    </source>
</evidence>
<evidence type="ECO:0000305" key="7"/>
<comment type="function">
    <text evidence="6">Cleaves the N-terminal propeptide of transglutaminase thus activating it.</text>
</comment>
<comment type="cofactor">
    <cofactor evidence="1">
        <name>Zn(2+)</name>
        <dbReference type="ChEBI" id="CHEBI:29105"/>
    </cofactor>
    <text evidence="1">Binds 1 zinc ion per subunit.</text>
</comment>
<comment type="subcellular location">
    <subcellularLocation>
        <location evidence="6">Secreted</location>
    </subcellularLocation>
</comment>
<comment type="similarity">
    <text evidence="7">Belongs to the peptidase M4 family.</text>
</comment>
<name>TAMP_STRMB</name>
<feature type="signal peptide" evidence="2">
    <location>
        <begin position="1"/>
        <end position="33"/>
    </location>
</feature>
<feature type="propeptide" id="PRO_0000423083" evidence="6">
    <location>
        <begin position="34"/>
        <end position="229"/>
    </location>
</feature>
<feature type="chain" id="PRO_0000078172" description="Transglutaminase-activating metalloprotease">
    <location>
        <begin position="230"/>
        <end position="760"/>
    </location>
</feature>
<feature type="domain" description="P/Homo B" evidence="3">
    <location>
        <begin position="640"/>
        <end position="760"/>
    </location>
</feature>
<feature type="region of interest" description="Disordered" evidence="5">
    <location>
        <begin position="32"/>
        <end position="59"/>
    </location>
</feature>
<feature type="region of interest" description="Disordered" evidence="5">
    <location>
        <begin position="228"/>
        <end position="265"/>
    </location>
</feature>
<feature type="compositionally biased region" description="Polar residues" evidence="5">
    <location>
        <begin position="228"/>
        <end position="257"/>
    </location>
</feature>
<feature type="active site" evidence="4">
    <location>
        <position position="367"/>
    </location>
</feature>
<feature type="active site" description="Proton donor" evidence="4">
    <location>
        <position position="454"/>
    </location>
</feature>
<feature type="binding site" evidence="4">
    <location>
        <position position="366"/>
    </location>
    <ligand>
        <name>Zn(2+)</name>
        <dbReference type="ChEBI" id="CHEBI:29105"/>
        <note>catalytic</note>
    </ligand>
</feature>
<feature type="binding site" evidence="4">
    <location>
        <position position="370"/>
    </location>
    <ligand>
        <name>Zn(2+)</name>
        <dbReference type="ChEBI" id="CHEBI:29105"/>
        <note>catalytic</note>
    </ligand>
</feature>
<feature type="binding site" evidence="4">
    <location>
        <position position="390"/>
    </location>
    <ligand>
        <name>Zn(2+)</name>
        <dbReference type="ChEBI" id="CHEBI:29105"/>
        <note>catalytic</note>
    </ligand>
</feature>
<protein>
    <recommendedName>
        <fullName>Transglutaminase-activating metalloprotease</fullName>
        <shortName>TAMEP</shortName>
        <shortName>TGase-activating protease</shortName>
        <ecNumber>3.4.-.-</ecNumber>
    </recommendedName>
    <alternativeName>
        <fullName>Transglutaminase-activating metalloproteinase</fullName>
    </alternativeName>
</protein>
<proteinExistence type="evidence at protein level"/>